<dbReference type="EMBL" id="AM263198">
    <property type="protein sequence ID" value="CAK21896.1"/>
    <property type="molecule type" value="Genomic_DNA"/>
</dbReference>
<dbReference type="RefSeq" id="WP_011703210.1">
    <property type="nucleotide sequence ID" value="NC_008555.1"/>
</dbReference>
<dbReference type="SMR" id="A0ALL4"/>
<dbReference type="STRING" id="386043.lwe2478"/>
<dbReference type="GeneID" id="61190397"/>
<dbReference type="KEGG" id="lwe:lwe2478"/>
<dbReference type="eggNOG" id="COG0224">
    <property type="taxonomic scope" value="Bacteria"/>
</dbReference>
<dbReference type="HOGENOM" id="CLU_050669_0_1_9"/>
<dbReference type="OrthoDB" id="9812769at2"/>
<dbReference type="Proteomes" id="UP000000779">
    <property type="component" value="Chromosome"/>
</dbReference>
<dbReference type="GO" id="GO:0005886">
    <property type="term" value="C:plasma membrane"/>
    <property type="evidence" value="ECO:0007669"/>
    <property type="project" value="UniProtKB-SubCell"/>
</dbReference>
<dbReference type="GO" id="GO:0045259">
    <property type="term" value="C:proton-transporting ATP synthase complex"/>
    <property type="evidence" value="ECO:0007669"/>
    <property type="project" value="UniProtKB-KW"/>
</dbReference>
<dbReference type="GO" id="GO:0005524">
    <property type="term" value="F:ATP binding"/>
    <property type="evidence" value="ECO:0007669"/>
    <property type="project" value="UniProtKB-UniRule"/>
</dbReference>
<dbReference type="GO" id="GO:0046933">
    <property type="term" value="F:proton-transporting ATP synthase activity, rotational mechanism"/>
    <property type="evidence" value="ECO:0007669"/>
    <property type="project" value="UniProtKB-UniRule"/>
</dbReference>
<dbReference type="GO" id="GO:0042777">
    <property type="term" value="P:proton motive force-driven plasma membrane ATP synthesis"/>
    <property type="evidence" value="ECO:0007669"/>
    <property type="project" value="UniProtKB-UniRule"/>
</dbReference>
<dbReference type="CDD" id="cd12151">
    <property type="entry name" value="F1-ATPase_gamma"/>
    <property type="match status" value="1"/>
</dbReference>
<dbReference type="FunFam" id="1.10.287.80:FF:000010">
    <property type="entry name" value="ATP synthase gamma chain"/>
    <property type="match status" value="1"/>
</dbReference>
<dbReference type="FunFam" id="3.40.1380.10:FF:000002">
    <property type="entry name" value="ATP synthase gamma chain"/>
    <property type="match status" value="1"/>
</dbReference>
<dbReference type="Gene3D" id="3.40.1380.10">
    <property type="match status" value="1"/>
</dbReference>
<dbReference type="Gene3D" id="1.10.287.80">
    <property type="entry name" value="ATP synthase, gamma subunit, helix hairpin domain"/>
    <property type="match status" value="1"/>
</dbReference>
<dbReference type="HAMAP" id="MF_00815">
    <property type="entry name" value="ATP_synth_gamma_bact"/>
    <property type="match status" value="1"/>
</dbReference>
<dbReference type="InterPro" id="IPR035968">
    <property type="entry name" value="ATP_synth_F1_ATPase_gsu"/>
</dbReference>
<dbReference type="InterPro" id="IPR000131">
    <property type="entry name" value="ATP_synth_F1_gsu"/>
</dbReference>
<dbReference type="InterPro" id="IPR023632">
    <property type="entry name" value="ATP_synth_F1_gsu_CS"/>
</dbReference>
<dbReference type="NCBIfam" id="TIGR01146">
    <property type="entry name" value="ATPsyn_F1gamma"/>
    <property type="match status" value="1"/>
</dbReference>
<dbReference type="NCBIfam" id="NF004147">
    <property type="entry name" value="PRK05621.2-1"/>
    <property type="match status" value="1"/>
</dbReference>
<dbReference type="PANTHER" id="PTHR11693">
    <property type="entry name" value="ATP SYNTHASE GAMMA CHAIN"/>
    <property type="match status" value="1"/>
</dbReference>
<dbReference type="PANTHER" id="PTHR11693:SF22">
    <property type="entry name" value="ATP SYNTHASE SUBUNIT GAMMA, MITOCHONDRIAL"/>
    <property type="match status" value="1"/>
</dbReference>
<dbReference type="Pfam" id="PF00231">
    <property type="entry name" value="ATP-synt"/>
    <property type="match status" value="1"/>
</dbReference>
<dbReference type="PRINTS" id="PR00126">
    <property type="entry name" value="ATPASEGAMMA"/>
</dbReference>
<dbReference type="SUPFAM" id="SSF52943">
    <property type="entry name" value="ATP synthase (F1-ATPase), gamma subunit"/>
    <property type="match status" value="1"/>
</dbReference>
<dbReference type="PROSITE" id="PS00153">
    <property type="entry name" value="ATPASE_GAMMA"/>
    <property type="match status" value="1"/>
</dbReference>
<proteinExistence type="inferred from homology"/>
<keyword id="KW-0066">ATP synthesis</keyword>
<keyword id="KW-1003">Cell membrane</keyword>
<keyword id="KW-0139">CF(1)</keyword>
<keyword id="KW-0375">Hydrogen ion transport</keyword>
<keyword id="KW-0406">Ion transport</keyword>
<keyword id="KW-0472">Membrane</keyword>
<keyword id="KW-0813">Transport</keyword>
<accession>A0ALL4</accession>
<feature type="chain" id="PRO_1000053246" description="ATP synthase gamma chain">
    <location>
        <begin position="1"/>
        <end position="290"/>
    </location>
</feature>
<comment type="function">
    <text evidence="1">Produces ATP from ADP in the presence of a proton gradient across the membrane. The gamma chain is believed to be important in regulating ATPase activity and the flow of protons through the CF(0) complex.</text>
</comment>
<comment type="subunit">
    <text evidence="1">F-type ATPases have 2 components, CF(1) - the catalytic core - and CF(0) - the membrane proton channel. CF(1) has five subunits: alpha(3), beta(3), gamma(1), delta(1), epsilon(1). CF(0) has three main subunits: a, b and c.</text>
</comment>
<comment type="subcellular location">
    <subcellularLocation>
        <location evidence="1">Cell membrane</location>
        <topology evidence="1">Peripheral membrane protein</topology>
    </subcellularLocation>
</comment>
<comment type="similarity">
    <text evidence="1">Belongs to the ATPase gamma chain family.</text>
</comment>
<gene>
    <name evidence="1" type="primary">atpG</name>
    <name type="ordered locus">lwe2478</name>
</gene>
<reference key="1">
    <citation type="journal article" date="2006" name="J. Bacteriol.">
        <title>Whole-genome sequence of Listeria welshimeri reveals common steps in genome reduction with Listeria innocua as compared to Listeria monocytogenes.</title>
        <authorList>
            <person name="Hain T."/>
            <person name="Steinweg C."/>
            <person name="Kuenne C.T."/>
            <person name="Billion A."/>
            <person name="Ghai R."/>
            <person name="Chatterjee S.S."/>
            <person name="Domann E."/>
            <person name="Kaerst U."/>
            <person name="Goesmann A."/>
            <person name="Bekel T."/>
            <person name="Bartels D."/>
            <person name="Kaiser O."/>
            <person name="Meyer F."/>
            <person name="Puehler A."/>
            <person name="Weisshaar B."/>
            <person name="Wehland J."/>
            <person name="Liang C."/>
            <person name="Dandekar T."/>
            <person name="Lampidis R."/>
            <person name="Kreft J."/>
            <person name="Goebel W."/>
            <person name="Chakraborty T."/>
        </authorList>
    </citation>
    <scope>NUCLEOTIDE SEQUENCE [LARGE SCALE GENOMIC DNA]</scope>
    <source>
        <strain>ATCC 35897 / DSM 20650 / CCUG 15529 / CIP 8149 / NCTC 11857 / SLCC 5334 / V8</strain>
    </source>
</reference>
<name>ATPG_LISW6</name>
<evidence type="ECO:0000255" key="1">
    <source>
        <dbReference type="HAMAP-Rule" id="MF_00815"/>
    </source>
</evidence>
<organism>
    <name type="scientific">Listeria welshimeri serovar 6b (strain ATCC 35897 / DSM 20650 / CCUG 15529 / CIP 8149 / NCTC 11857 / SLCC 5334 / V8)</name>
    <dbReference type="NCBI Taxonomy" id="386043"/>
    <lineage>
        <taxon>Bacteria</taxon>
        <taxon>Bacillati</taxon>
        <taxon>Bacillota</taxon>
        <taxon>Bacilli</taxon>
        <taxon>Bacillales</taxon>
        <taxon>Listeriaceae</taxon>
        <taxon>Listeria</taxon>
    </lineage>
</organism>
<sequence>MASLIDIKQRITSTRKTSQITKAMQMVSAAKLGRAESNARSYEPYVSKIKDVVTHVASTGNSNDHPMLVSRPVHRTGYIVLTSDTGLAGSYNSSVIKEVFQEINKKHTSSDEYAIITVGRSARDFFKARQMNVVLEVQGITDHPIFAEIKDIASNTVQMFEDGVYDEVFIYYNHHINSISSELRKEQLLPLTEFHEKGKEADVDLTTYEFEPSEQEILEVLLPQYVESLIFGALLDAKAAEHAARMTAMRSATDNASDLISDLSLQYNRARQAAITQEITEIVGGAAALE</sequence>
<protein>
    <recommendedName>
        <fullName evidence="1">ATP synthase gamma chain</fullName>
    </recommendedName>
    <alternativeName>
        <fullName evidence="1">ATP synthase F1 sector gamma subunit</fullName>
    </alternativeName>
    <alternativeName>
        <fullName evidence="1">F-ATPase gamma subunit</fullName>
    </alternativeName>
</protein>